<gene>
    <name type="ordered locus">MT0968.2</name>
</gene>
<proteinExistence type="predicted"/>
<feature type="chain" id="PRO_0000427621" description="Uncharacterized protein MT0968.2">
    <location>
        <begin position="1"/>
        <end position="92"/>
    </location>
</feature>
<organism>
    <name type="scientific">Mycobacterium tuberculosis (strain CDC 1551 / Oshkosh)</name>
    <dbReference type="NCBI Taxonomy" id="83331"/>
    <lineage>
        <taxon>Bacteria</taxon>
        <taxon>Bacillati</taxon>
        <taxon>Actinomycetota</taxon>
        <taxon>Actinomycetes</taxon>
        <taxon>Mycobacteriales</taxon>
        <taxon>Mycobacteriaceae</taxon>
        <taxon>Mycobacterium</taxon>
        <taxon>Mycobacterium tuberculosis complex</taxon>
    </lineage>
</organism>
<sequence>MGRSATIAMVPKRRDAMNRHSGPILSSGFIASSSNSCPANSLRMPSALAAETLSFDDRAVRRSTHHPGGGYPQKHAINLQSGLCPAYANASR</sequence>
<reference key="1">
    <citation type="journal article" date="2002" name="J. Bacteriol.">
        <title>Whole-genome comparison of Mycobacterium tuberculosis clinical and laboratory strains.</title>
        <authorList>
            <person name="Fleischmann R.D."/>
            <person name="Alland D."/>
            <person name="Eisen J.A."/>
            <person name="Carpenter L."/>
            <person name="White O."/>
            <person name="Peterson J.D."/>
            <person name="DeBoy R.T."/>
            <person name="Dodson R.J."/>
            <person name="Gwinn M.L."/>
            <person name="Haft D.H."/>
            <person name="Hickey E.K."/>
            <person name="Kolonay J.F."/>
            <person name="Nelson W.C."/>
            <person name="Umayam L.A."/>
            <person name="Ermolaeva M.D."/>
            <person name="Salzberg S.L."/>
            <person name="Delcher A."/>
            <person name="Utterback T.R."/>
            <person name="Weidman J.F."/>
            <person name="Khouri H.M."/>
            <person name="Gill J."/>
            <person name="Mikula A."/>
            <person name="Bishai W."/>
            <person name="Jacobs W.R. Jr."/>
            <person name="Venter J.C."/>
            <person name="Fraser C.M."/>
        </authorList>
    </citation>
    <scope>NUCLEOTIDE SEQUENCE [LARGE SCALE GENOMIC DNA]</scope>
    <source>
        <strain>CDC 1551 / Oshkosh</strain>
    </source>
</reference>
<protein>
    <recommendedName>
        <fullName>Uncharacterized protein MT0968.2</fullName>
    </recommendedName>
</protein>
<accession>P9WKN8</accession>
<accession>L0T586</accession>
<accession>P64763</accession>
<accession>P71567</accession>
<dbReference type="EMBL" id="AE000516">
    <property type="status" value="NOT_ANNOTATED_CDS"/>
    <property type="molecule type" value="Genomic_DNA"/>
</dbReference>
<dbReference type="PIR" id="D70715">
    <property type="entry name" value="D70715"/>
</dbReference>
<dbReference type="RefSeq" id="WP_003901948.1">
    <property type="nucleotide sequence ID" value="NZ_KK341227.1"/>
</dbReference>
<dbReference type="SMR" id="P9WKN8"/>
<dbReference type="Proteomes" id="UP000001020">
    <property type="component" value="Chromosome"/>
</dbReference>
<keyword id="KW-1185">Reference proteome</keyword>
<name>Y942_MYCTO</name>